<sequence>MKNNYTSLKSPLDEEDELKTDHEIDLEKGPLPEYDSEEEGALPPYSDHALVNNPPNTHRENNPSRSTDNSSPFLIKLLISFTPIYVLNVLAICYLTYKDAFFKDYGAAEWTLFGFWCLVCTLALIFLTYFYETWVKAVKVTVISLAKCVKVISIGLFNIRREMMIIIWILWLIICCILFVYIKSGDLILNKALICSTCTISAVLLLIVSSVCIPFWTFERTLAKLAKVLLLQSGIVLVLNGTMFLRGKHFERIGCEIEASVLFIMGNVLFLCEMECPGALIRTRNSIRNGIAFILGGIGNAMMGLANAIRGANDNNDIPLGEMDVESEV</sequence>
<organism>
    <name type="scientific">Schizosaccharomyces pombe (strain 972 / ATCC 24843)</name>
    <name type="common">Fission yeast</name>
    <dbReference type="NCBI Taxonomy" id="284812"/>
    <lineage>
        <taxon>Eukaryota</taxon>
        <taxon>Fungi</taxon>
        <taxon>Dikarya</taxon>
        <taxon>Ascomycota</taxon>
        <taxon>Taphrinomycotina</taxon>
        <taxon>Schizosaccharomycetes</taxon>
        <taxon>Schizosaccharomycetales</taxon>
        <taxon>Schizosaccharomycetaceae</taxon>
        <taxon>Schizosaccharomyces</taxon>
    </lineage>
</organism>
<dbReference type="EMBL" id="CU329672">
    <property type="protein sequence ID" value="CAA20789.1"/>
    <property type="molecule type" value="Genomic_DNA"/>
</dbReference>
<dbReference type="PIR" id="T41123">
    <property type="entry name" value="T41123"/>
</dbReference>
<dbReference type="RefSeq" id="NP_588423.1">
    <property type="nucleotide sequence ID" value="NM_001023414.2"/>
</dbReference>
<dbReference type="SMR" id="O74474"/>
<dbReference type="BioGRID" id="275546">
    <property type="interactions" value="32"/>
</dbReference>
<dbReference type="STRING" id="284812.O74474"/>
<dbReference type="PaxDb" id="4896-SPCC1739.15.1"/>
<dbReference type="EnsemblFungi" id="SPCC1739.15.1">
    <property type="protein sequence ID" value="SPCC1739.15.1:pep"/>
    <property type="gene ID" value="SPCC1739.15"/>
</dbReference>
<dbReference type="GeneID" id="2538972"/>
<dbReference type="KEGG" id="spo:2538972"/>
<dbReference type="PomBase" id="SPCC1739.15">
    <property type="gene designation" value="wtf21"/>
</dbReference>
<dbReference type="VEuPathDB" id="FungiDB:SPCC1739.15"/>
<dbReference type="HOGENOM" id="CLU_763247_0_0_1"/>
<dbReference type="InParanoid" id="O74474"/>
<dbReference type="PhylomeDB" id="O74474"/>
<dbReference type="PRO" id="PR:O74474"/>
<dbReference type="Proteomes" id="UP000002485">
    <property type="component" value="Chromosome III"/>
</dbReference>
<dbReference type="GO" id="GO:0005737">
    <property type="term" value="C:cytoplasm"/>
    <property type="evidence" value="ECO:0000250"/>
    <property type="project" value="PomBase"/>
</dbReference>
<dbReference type="GO" id="GO:0000324">
    <property type="term" value="C:fungal-type vacuole"/>
    <property type="evidence" value="ECO:0007005"/>
    <property type="project" value="PomBase"/>
</dbReference>
<dbReference type="GO" id="GO:0005774">
    <property type="term" value="C:vacuolar membrane"/>
    <property type="evidence" value="ECO:0007669"/>
    <property type="project" value="UniProtKB-SubCell"/>
</dbReference>
<dbReference type="GO" id="GO:0110134">
    <property type="term" value="P:meiotic drive"/>
    <property type="evidence" value="ECO:0000255"/>
    <property type="project" value="PomBase"/>
</dbReference>
<dbReference type="InterPro" id="IPR004982">
    <property type="entry name" value="WTF"/>
</dbReference>
<dbReference type="Pfam" id="PF03303">
    <property type="entry name" value="WTF"/>
    <property type="match status" value="1"/>
</dbReference>
<name>WTF21_SCHPO</name>
<evidence type="ECO:0000250" key="1">
    <source>
        <dbReference type="UniProtKB" id="A0A218N034"/>
    </source>
</evidence>
<evidence type="ECO:0000250" key="2">
    <source>
        <dbReference type="UniProtKB" id="A0A482ATU4"/>
    </source>
</evidence>
<evidence type="ECO:0000250" key="3">
    <source>
        <dbReference type="UniProtKB" id="O74420"/>
    </source>
</evidence>
<evidence type="ECO:0000255" key="4"/>
<evidence type="ECO:0000256" key="5">
    <source>
        <dbReference type="SAM" id="MobiDB-lite"/>
    </source>
</evidence>
<evidence type="ECO:0000305" key="6"/>
<evidence type="ECO:0000312" key="7">
    <source>
        <dbReference type="PomBase" id="SPCC1739.15"/>
    </source>
</evidence>
<feature type="chain" id="PRO_0000193233" description="Meiotic drive suppressor wtf21">
    <location>
        <begin position="1"/>
        <end position="329"/>
    </location>
</feature>
<feature type="transmembrane region" description="Helical" evidence="4">
    <location>
        <begin position="73"/>
        <end position="95"/>
    </location>
</feature>
<feature type="transmembrane region" description="Helical" evidence="4">
    <location>
        <begin position="110"/>
        <end position="132"/>
    </location>
</feature>
<feature type="transmembrane region" description="Helical" evidence="4">
    <location>
        <begin position="165"/>
        <end position="182"/>
    </location>
</feature>
<feature type="transmembrane region" description="Helical" evidence="4">
    <location>
        <begin position="192"/>
        <end position="214"/>
    </location>
</feature>
<feature type="transmembrane region" description="Helical" evidence="4">
    <location>
        <begin position="290"/>
        <end position="312"/>
    </location>
</feature>
<feature type="region of interest" description="Disordered" evidence="5">
    <location>
        <begin position="1"/>
        <end position="68"/>
    </location>
</feature>
<feature type="compositionally biased region" description="Basic and acidic residues" evidence="5">
    <location>
        <begin position="19"/>
        <end position="30"/>
    </location>
</feature>
<protein>
    <recommendedName>
        <fullName evidence="7">Meiotic drive suppressor wtf21</fullName>
    </recommendedName>
</protein>
<reference key="1">
    <citation type="journal article" date="2002" name="Nature">
        <title>The genome sequence of Schizosaccharomyces pombe.</title>
        <authorList>
            <person name="Wood V."/>
            <person name="Gwilliam R."/>
            <person name="Rajandream M.A."/>
            <person name="Lyne M.H."/>
            <person name="Lyne R."/>
            <person name="Stewart A."/>
            <person name="Sgouros J.G."/>
            <person name="Peat N."/>
            <person name="Hayles J."/>
            <person name="Baker S.G."/>
            <person name="Basham D."/>
            <person name="Bowman S."/>
            <person name="Brooks K."/>
            <person name="Brown D."/>
            <person name="Brown S."/>
            <person name="Chillingworth T."/>
            <person name="Churcher C.M."/>
            <person name="Collins M."/>
            <person name="Connor R."/>
            <person name="Cronin A."/>
            <person name="Davis P."/>
            <person name="Feltwell T."/>
            <person name="Fraser A."/>
            <person name="Gentles S."/>
            <person name="Goble A."/>
            <person name="Hamlin N."/>
            <person name="Harris D.E."/>
            <person name="Hidalgo J."/>
            <person name="Hodgson G."/>
            <person name="Holroyd S."/>
            <person name="Hornsby T."/>
            <person name="Howarth S."/>
            <person name="Huckle E.J."/>
            <person name="Hunt S."/>
            <person name="Jagels K."/>
            <person name="James K.D."/>
            <person name="Jones L."/>
            <person name="Jones M."/>
            <person name="Leather S."/>
            <person name="McDonald S."/>
            <person name="McLean J."/>
            <person name="Mooney P."/>
            <person name="Moule S."/>
            <person name="Mungall K.L."/>
            <person name="Murphy L.D."/>
            <person name="Niblett D."/>
            <person name="Odell C."/>
            <person name="Oliver K."/>
            <person name="O'Neil S."/>
            <person name="Pearson D."/>
            <person name="Quail M.A."/>
            <person name="Rabbinowitsch E."/>
            <person name="Rutherford K.M."/>
            <person name="Rutter S."/>
            <person name="Saunders D."/>
            <person name="Seeger K."/>
            <person name="Sharp S."/>
            <person name="Skelton J."/>
            <person name="Simmonds M.N."/>
            <person name="Squares R."/>
            <person name="Squares S."/>
            <person name="Stevens K."/>
            <person name="Taylor K."/>
            <person name="Taylor R.G."/>
            <person name="Tivey A."/>
            <person name="Walsh S.V."/>
            <person name="Warren T."/>
            <person name="Whitehead S."/>
            <person name="Woodward J.R."/>
            <person name="Volckaert G."/>
            <person name="Aert R."/>
            <person name="Robben J."/>
            <person name="Grymonprez B."/>
            <person name="Weltjens I."/>
            <person name="Vanstreels E."/>
            <person name="Rieger M."/>
            <person name="Schaefer M."/>
            <person name="Mueller-Auer S."/>
            <person name="Gabel C."/>
            <person name="Fuchs M."/>
            <person name="Duesterhoeft A."/>
            <person name="Fritzc C."/>
            <person name="Holzer E."/>
            <person name="Moestl D."/>
            <person name="Hilbert H."/>
            <person name="Borzym K."/>
            <person name="Langer I."/>
            <person name="Beck A."/>
            <person name="Lehrach H."/>
            <person name="Reinhardt R."/>
            <person name="Pohl T.M."/>
            <person name="Eger P."/>
            <person name="Zimmermann W."/>
            <person name="Wedler H."/>
            <person name="Wambutt R."/>
            <person name="Purnelle B."/>
            <person name="Goffeau A."/>
            <person name="Cadieu E."/>
            <person name="Dreano S."/>
            <person name="Gloux S."/>
            <person name="Lelaure V."/>
            <person name="Mottier S."/>
            <person name="Galibert F."/>
            <person name="Aves S.J."/>
            <person name="Xiang Z."/>
            <person name="Hunt C."/>
            <person name="Moore K."/>
            <person name="Hurst S.M."/>
            <person name="Lucas M."/>
            <person name="Rochet M."/>
            <person name="Gaillardin C."/>
            <person name="Tallada V.A."/>
            <person name="Garzon A."/>
            <person name="Thode G."/>
            <person name="Daga R.R."/>
            <person name="Cruzado L."/>
            <person name="Jimenez J."/>
            <person name="Sanchez M."/>
            <person name="del Rey F."/>
            <person name="Benito J."/>
            <person name="Dominguez A."/>
            <person name="Revuelta J.L."/>
            <person name="Moreno S."/>
            <person name="Armstrong J."/>
            <person name="Forsburg S.L."/>
            <person name="Cerutti L."/>
            <person name="Lowe T."/>
            <person name="McCombie W.R."/>
            <person name="Paulsen I."/>
            <person name="Potashkin J."/>
            <person name="Shpakovski G.V."/>
            <person name="Ussery D."/>
            <person name="Barrell B.G."/>
            <person name="Nurse P."/>
        </authorList>
    </citation>
    <scope>NUCLEOTIDE SEQUENCE [LARGE SCALE GENOMIC DNA]</scope>
    <source>
        <strain>972 / ATCC 24843</strain>
    </source>
</reference>
<comment type="function">
    <text evidence="1 2">Acts as a suppressor component of the dual wtf meiotic drive system, and can suppress but not confer meiotic drive by compatible poisons (By similarity). Wtf meiotic drive systems promote unequal transmission of alleles from the parental zygote to progeny spores by encoding a poison and an antidote from the same locus; the poison is trans-acting and forms toxic aggregates in all spores within an ascus, wherease the antidote is spore-specific and targets aggregates for degradation by the vacuole (By similarity). Meiotic drive by wtf systems therefore lead to poisoning of all progeny that do not inherit the dual poison/antidote allele, or express a compatible antidote (By similarity).</text>
</comment>
<comment type="subunit">
    <text evidence="1 3">Homomer (By similarity). Interacts with other proteins that exhibit high sequence similarity (By similarity).</text>
</comment>
<comment type="subcellular location">
    <subcellularLocation>
        <location evidence="1 4">Spore membrane</location>
        <topology evidence="4">Multi-pass membrane protein</topology>
    </subcellularLocation>
    <subcellularLocation>
        <location evidence="1 4">Vacuole membrane</location>
        <topology evidence="4">Multi-pass membrane protein</topology>
    </subcellularLocation>
</comment>
<comment type="similarity">
    <text evidence="6">Belongs to the WTF family.</text>
</comment>
<proteinExistence type="inferred from homology"/>
<keyword id="KW-0472">Membrane</keyword>
<keyword id="KW-1185">Reference proteome</keyword>
<keyword id="KW-0812">Transmembrane</keyword>
<keyword id="KW-1133">Transmembrane helix</keyword>
<keyword id="KW-0926">Vacuole</keyword>
<gene>
    <name evidence="7" type="primary">wtf21</name>
    <name type="synonym">wtf3</name>
    <name evidence="7" type="ORF">SPCC1739.15</name>
</gene>
<accession>O74474</accession>